<organism>
    <name type="scientific">Thermoanaerobacter sp. (strain X514)</name>
    <dbReference type="NCBI Taxonomy" id="399726"/>
    <lineage>
        <taxon>Bacteria</taxon>
        <taxon>Bacillati</taxon>
        <taxon>Bacillota</taxon>
        <taxon>Clostridia</taxon>
        <taxon>Thermoanaerobacterales</taxon>
        <taxon>Thermoanaerobacteraceae</taxon>
        <taxon>Thermoanaerobacter</taxon>
    </lineage>
</organism>
<protein>
    <recommendedName>
        <fullName evidence="1">ATP phosphoribosyltransferase</fullName>
        <shortName evidence="1">ATP-PRT</shortName>
        <shortName evidence="1">ATP-PRTase</shortName>
        <ecNumber evidence="1">2.4.2.17</ecNumber>
    </recommendedName>
</protein>
<feature type="chain" id="PRO_1000135295" description="ATP phosphoribosyltransferase">
    <location>
        <begin position="1"/>
        <end position="213"/>
    </location>
</feature>
<proteinExistence type="inferred from homology"/>
<dbReference type="EC" id="2.4.2.17" evidence="1"/>
<dbReference type="EMBL" id="CP000923">
    <property type="protein sequence ID" value="ABY92299.1"/>
    <property type="molecule type" value="Genomic_DNA"/>
</dbReference>
<dbReference type="RefSeq" id="WP_003870626.1">
    <property type="nucleotide sequence ID" value="NC_010320.1"/>
</dbReference>
<dbReference type="SMR" id="B0K623"/>
<dbReference type="KEGG" id="tex:Teth514_1000"/>
<dbReference type="HOGENOM" id="CLU_038115_2_0_9"/>
<dbReference type="UniPathway" id="UPA00031">
    <property type="reaction ID" value="UER00006"/>
</dbReference>
<dbReference type="Proteomes" id="UP000002155">
    <property type="component" value="Chromosome"/>
</dbReference>
<dbReference type="GO" id="GO:0005737">
    <property type="term" value="C:cytoplasm"/>
    <property type="evidence" value="ECO:0007669"/>
    <property type="project" value="UniProtKB-SubCell"/>
</dbReference>
<dbReference type="GO" id="GO:0005524">
    <property type="term" value="F:ATP binding"/>
    <property type="evidence" value="ECO:0007669"/>
    <property type="project" value="UniProtKB-KW"/>
</dbReference>
<dbReference type="GO" id="GO:0003879">
    <property type="term" value="F:ATP phosphoribosyltransferase activity"/>
    <property type="evidence" value="ECO:0007669"/>
    <property type="project" value="UniProtKB-UniRule"/>
</dbReference>
<dbReference type="GO" id="GO:0000105">
    <property type="term" value="P:L-histidine biosynthetic process"/>
    <property type="evidence" value="ECO:0007669"/>
    <property type="project" value="UniProtKB-UniRule"/>
</dbReference>
<dbReference type="CDD" id="cd13595">
    <property type="entry name" value="PBP2_HisGs"/>
    <property type="match status" value="1"/>
</dbReference>
<dbReference type="FunFam" id="3.40.190.10:FF:000008">
    <property type="entry name" value="ATP phosphoribosyltransferase"/>
    <property type="match status" value="1"/>
</dbReference>
<dbReference type="Gene3D" id="3.40.190.10">
    <property type="entry name" value="Periplasmic binding protein-like II"/>
    <property type="match status" value="2"/>
</dbReference>
<dbReference type="HAMAP" id="MF_01018">
    <property type="entry name" value="HisG_Short"/>
    <property type="match status" value="1"/>
</dbReference>
<dbReference type="InterPro" id="IPR013820">
    <property type="entry name" value="ATP_PRibTrfase_cat"/>
</dbReference>
<dbReference type="InterPro" id="IPR018198">
    <property type="entry name" value="ATP_PRibTrfase_CS"/>
</dbReference>
<dbReference type="InterPro" id="IPR001348">
    <property type="entry name" value="ATP_PRibTrfase_HisG"/>
</dbReference>
<dbReference type="InterPro" id="IPR024893">
    <property type="entry name" value="ATP_PRibTrfase_HisG_short"/>
</dbReference>
<dbReference type="NCBIfam" id="TIGR00070">
    <property type="entry name" value="hisG"/>
    <property type="match status" value="1"/>
</dbReference>
<dbReference type="PANTHER" id="PTHR21403:SF8">
    <property type="entry name" value="ATP PHOSPHORIBOSYLTRANSFERASE"/>
    <property type="match status" value="1"/>
</dbReference>
<dbReference type="PANTHER" id="PTHR21403">
    <property type="entry name" value="ATP PHOSPHORIBOSYLTRANSFERASE ATP-PRTASE"/>
    <property type="match status" value="1"/>
</dbReference>
<dbReference type="Pfam" id="PF01634">
    <property type="entry name" value="HisG"/>
    <property type="match status" value="1"/>
</dbReference>
<dbReference type="SUPFAM" id="SSF53850">
    <property type="entry name" value="Periplasmic binding protein-like II"/>
    <property type="match status" value="1"/>
</dbReference>
<dbReference type="PROSITE" id="PS01316">
    <property type="entry name" value="ATP_P_PHORIBOSYLTR"/>
    <property type="match status" value="1"/>
</dbReference>
<sequence length="213" mass="23761">MENISIALPKGRMADSAITLFEKAGIAENILKDISRKLVVNDHKNLMKFMLVKPMDVPTYVEHGAADLGICGKDILLEQKKDCYEVLDLKFGFCKMVVAGPKEAKDSFLTNKRVATKFPNIAEEFFRQKGENVEIIKLNGSVELAPIVGLSEVIVDIVETGNTLRENGLIVIEEIFPSSARLIVNKASLKTKSQRIKEIIIKLKEVVETFKEV</sequence>
<reference key="1">
    <citation type="submission" date="2008-01" db="EMBL/GenBank/DDBJ databases">
        <title>Complete sequence of Thermoanaerobacter sp. X514.</title>
        <authorList>
            <consortium name="US DOE Joint Genome Institute"/>
            <person name="Copeland A."/>
            <person name="Lucas S."/>
            <person name="Lapidus A."/>
            <person name="Barry K."/>
            <person name="Glavina del Rio T."/>
            <person name="Dalin E."/>
            <person name="Tice H."/>
            <person name="Pitluck S."/>
            <person name="Bruce D."/>
            <person name="Goodwin L."/>
            <person name="Saunders E."/>
            <person name="Brettin T."/>
            <person name="Detter J.C."/>
            <person name="Han C."/>
            <person name="Schmutz J."/>
            <person name="Larimer F."/>
            <person name="Land M."/>
            <person name="Hauser L."/>
            <person name="Kyrpides N."/>
            <person name="Kim E."/>
            <person name="Hemme C."/>
            <person name="Fields M.W."/>
            <person name="He Z."/>
            <person name="Zhou J."/>
            <person name="Richardson P."/>
        </authorList>
    </citation>
    <scope>NUCLEOTIDE SEQUENCE [LARGE SCALE GENOMIC DNA]</scope>
    <source>
        <strain>X514</strain>
    </source>
</reference>
<keyword id="KW-0028">Amino-acid biosynthesis</keyword>
<keyword id="KW-0067">ATP-binding</keyword>
<keyword id="KW-0963">Cytoplasm</keyword>
<keyword id="KW-0328">Glycosyltransferase</keyword>
<keyword id="KW-0368">Histidine biosynthesis</keyword>
<keyword id="KW-0547">Nucleotide-binding</keyword>
<keyword id="KW-0808">Transferase</keyword>
<gene>
    <name evidence="1" type="primary">hisG</name>
    <name type="ordered locus">Teth514_1000</name>
</gene>
<comment type="function">
    <text evidence="1">Catalyzes the condensation of ATP and 5-phosphoribose 1-diphosphate to form N'-(5'-phosphoribosyl)-ATP (PR-ATP). Has a crucial role in the pathway because the rate of histidine biosynthesis seems to be controlled primarily by regulation of HisG enzymatic activity.</text>
</comment>
<comment type="catalytic activity">
    <reaction evidence="1">
        <text>1-(5-phospho-beta-D-ribosyl)-ATP + diphosphate = 5-phospho-alpha-D-ribose 1-diphosphate + ATP</text>
        <dbReference type="Rhea" id="RHEA:18473"/>
        <dbReference type="ChEBI" id="CHEBI:30616"/>
        <dbReference type="ChEBI" id="CHEBI:33019"/>
        <dbReference type="ChEBI" id="CHEBI:58017"/>
        <dbReference type="ChEBI" id="CHEBI:73183"/>
        <dbReference type="EC" id="2.4.2.17"/>
    </reaction>
</comment>
<comment type="pathway">
    <text evidence="1">Amino-acid biosynthesis; L-histidine biosynthesis; L-histidine from 5-phospho-alpha-D-ribose 1-diphosphate: step 1/9.</text>
</comment>
<comment type="subunit">
    <text evidence="1">Heteromultimer composed of HisG and HisZ subunits.</text>
</comment>
<comment type="subcellular location">
    <subcellularLocation>
        <location evidence="1">Cytoplasm</location>
    </subcellularLocation>
</comment>
<comment type="domain">
    <text>Lacks the C-terminal regulatory region which is replaced by HisZ.</text>
</comment>
<comment type="similarity">
    <text evidence="1">Belongs to the ATP phosphoribosyltransferase family. Short subfamily.</text>
</comment>
<accession>B0K623</accession>
<evidence type="ECO:0000255" key="1">
    <source>
        <dbReference type="HAMAP-Rule" id="MF_01018"/>
    </source>
</evidence>
<name>HIS1_THEPX</name>